<evidence type="ECO:0000250" key="1">
    <source>
        <dbReference type="UniProtKB" id="P42891"/>
    </source>
</evidence>
<evidence type="ECO:0000255" key="2"/>
<evidence type="ECO:0000255" key="3">
    <source>
        <dbReference type="PROSITE-ProRule" id="PRU01233"/>
    </source>
</evidence>
<evidence type="ECO:0000255" key="4">
    <source>
        <dbReference type="PROSITE-ProRule" id="PRU10095"/>
    </source>
</evidence>
<evidence type="ECO:0000269" key="5">
    <source>
    </source>
</evidence>
<evidence type="ECO:0000269" key="6">
    <source>
    </source>
</evidence>
<evidence type="ECO:0000269" key="7">
    <source>
    </source>
</evidence>
<evidence type="ECO:0000269" key="8">
    <source>
    </source>
</evidence>
<evidence type="ECO:0000269" key="9">
    <source>
    </source>
</evidence>
<evidence type="ECO:0000269" key="10">
    <source>
    </source>
</evidence>
<evidence type="ECO:0000269" key="11">
    <source>
    </source>
</evidence>
<evidence type="ECO:0000269" key="12">
    <source>
    </source>
</evidence>
<evidence type="ECO:0000269" key="13">
    <source>
    </source>
</evidence>
<evidence type="ECO:0000269" key="14">
    <source ref="6"/>
</evidence>
<evidence type="ECO:0000303" key="15">
    <source>
    </source>
</evidence>
<evidence type="ECO:0000303" key="16">
    <source>
    </source>
</evidence>
<evidence type="ECO:0000303" key="17">
    <source>
    </source>
</evidence>
<evidence type="ECO:0000303" key="18">
    <source>
    </source>
</evidence>
<evidence type="ECO:0000303" key="19">
    <source ref="4"/>
</evidence>
<evidence type="ECO:0000305" key="20"/>
<evidence type="ECO:0000305" key="21">
    <source>
    </source>
</evidence>
<evidence type="ECO:0007744" key="22">
    <source>
    </source>
</evidence>
<evidence type="ECO:0007829" key="23">
    <source>
        <dbReference type="PDB" id="3DWB"/>
    </source>
</evidence>
<dbReference type="EC" id="3.4.24.71" evidence="11"/>
<dbReference type="EMBL" id="D49471">
    <property type="protein sequence ID" value="BAA08442.1"/>
    <property type="molecule type" value="mRNA"/>
</dbReference>
<dbReference type="EMBL" id="D43698">
    <property type="protein sequence ID" value="BAA07800.1"/>
    <property type="molecule type" value="mRNA"/>
</dbReference>
<dbReference type="EMBL" id="X91922">
    <property type="protein sequence ID" value="CAA63015.1"/>
    <property type="molecule type" value="Genomic_DNA"/>
</dbReference>
<dbReference type="EMBL" id="X91923">
    <property type="protein sequence ID" value="CAA63015.1"/>
    <property type="status" value="JOINED"/>
    <property type="molecule type" value="Genomic_DNA"/>
</dbReference>
<dbReference type="EMBL" id="X91924">
    <property type="protein sequence ID" value="CAA63015.1"/>
    <property type="status" value="JOINED"/>
    <property type="molecule type" value="Genomic_DNA"/>
</dbReference>
<dbReference type="EMBL" id="X91925">
    <property type="protein sequence ID" value="CAA63015.1"/>
    <property type="status" value="JOINED"/>
    <property type="molecule type" value="Genomic_DNA"/>
</dbReference>
<dbReference type="EMBL" id="X91926">
    <property type="protein sequence ID" value="CAA63015.1"/>
    <property type="status" value="JOINED"/>
    <property type="molecule type" value="Genomic_DNA"/>
</dbReference>
<dbReference type="EMBL" id="X91927">
    <property type="protein sequence ID" value="CAA63015.1"/>
    <property type="status" value="JOINED"/>
    <property type="molecule type" value="Genomic_DNA"/>
</dbReference>
<dbReference type="EMBL" id="X91928">
    <property type="protein sequence ID" value="CAA63015.1"/>
    <property type="status" value="JOINED"/>
    <property type="molecule type" value="Genomic_DNA"/>
</dbReference>
<dbReference type="EMBL" id="X91929">
    <property type="protein sequence ID" value="CAA63015.1"/>
    <property type="status" value="JOINED"/>
    <property type="molecule type" value="Genomic_DNA"/>
</dbReference>
<dbReference type="EMBL" id="X91930">
    <property type="protein sequence ID" value="CAA63015.1"/>
    <property type="status" value="JOINED"/>
    <property type="molecule type" value="Genomic_DNA"/>
</dbReference>
<dbReference type="EMBL" id="X91931">
    <property type="protein sequence ID" value="CAA63015.1"/>
    <property type="status" value="JOINED"/>
    <property type="molecule type" value="Genomic_DNA"/>
</dbReference>
<dbReference type="EMBL" id="X91932">
    <property type="protein sequence ID" value="CAA63015.1"/>
    <property type="status" value="JOINED"/>
    <property type="molecule type" value="Genomic_DNA"/>
</dbReference>
<dbReference type="EMBL" id="X91933">
    <property type="protein sequence ID" value="CAA63015.1"/>
    <property type="status" value="JOINED"/>
    <property type="molecule type" value="Genomic_DNA"/>
</dbReference>
<dbReference type="EMBL" id="X91934">
    <property type="protein sequence ID" value="CAA63015.1"/>
    <property type="status" value="JOINED"/>
    <property type="molecule type" value="Genomic_DNA"/>
</dbReference>
<dbReference type="EMBL" id="X91935">
    <property type="protein sequence ID" value="CAA63015.1"/>
    <property type="status" value="JOINED"/>
    <property type="molecule type" value="Genomic_DNA"/>
</dbReference>
<dbReference type="EMBL" id="X91936">
    <property type="protein sequence ID" value="CAA63015.1"/>
    <property type="status" value="JOINED"/>
    <property type="molecule type" value="Genomic_DNA"/>
</dbReference>
<dbReference type="EMBL" id="X91937">
    <property type="protein sequence ID" value="CAA63015.1"/>
    <property type="status" value="JOINED"/>
    <property type="molecule type" value="Genomic_DNA"/>
</dbReference>
<dbReference type="EMBL" id="X91938">
    <property type="protein sequence ID" value="CAA63015.1"/>
    <property type="status" value="JOINED"/>
    <property type="molecule type" value="Genomic_DNA"/>
</dbReference>
<dbReference type="EMBL" id="X91939">
    <property type="protein sequence ID" value="CAA63015.1"/>
    <property type="status" value="JOINED"/>
    <property type="molecule type" value="Genomic_DNA"/>
</dbReference>
<dbReference type="EMBL" id="X91923">
    <property type="protein sequence ID" value="CAA63016.1"/>
    <property type="molecule type" value="Genomic_DNA"/>
</dbReference>
<dbReference type="EMBL" id="X91924">
    <property type="protein sequence ID" value="CAA63016.1"/>
    <property type="status" value="JOINED"/>
    <property type="molecule type" value="Genomic_DNA"/>
</dbReference>
<dbReference type="EMBL" id="X91925">
    <property type="protein sequence ID" value="CAA63016.1"/>
    <property type="status" value="JOINED"/>
    <property type="molecule type" value="Genomic_DNA"/>
</dbReference>
<dbReference type="EMBL" id="X91926">
    <property type="protein sequence ID" value="CAA63016.1"/>
    <property type="status" value="JOINED"/>
    <property type="molecule type" value="Genomic_DNA"/>
</dbReference>
<dbReference type="EMBL" id="X91927">
    <property type="protein sequence ID" value="CAA63016.1"/>
    <property type="status" value="JOINED"/>
    <property type="molecule type" value="Genomic_DNA"/>
</dbReference>
<dbReference type="EMBL" id="X91928">
    <property type="protein sequence ID" value="CAA63016.1"/>
    <property type="status" value="JOINED"/>
    <property type="molecule type" value="Genomic_DNA"/>
</dbReference>
<dbReference type="EMBL" id="X91929">
    <property type="protein sequence ID" value="CAA63016.1"/>
    <property type="status" value="JOINED"/>
    <property type="molecule type" value="Genomic_DNA"/>
</dbReference>
<dbReference type="EMBL" id="X91930">
    <property type="protein sequence ID" value="CAA63016.1"/>
    <property type="status" value="JOINED"/>
    <property type="molecule type" value="Genomic_DNA"/>
</dbReference>
<dbReference type="EMBL" id="X91931">
    <property type="protein sequence ID" value="CAA63016.1"/>
    <property type="status" value="JOINED"/>
    <property type="molecule type" value="Genomic_DNA"/>
</dbReference>
<dbReference type="EMBL" id="X91932">
    <property type="protein sequence ID" value="CAA63016.1"/>
    <property type="status" value="JOINED"/>
    <property type="molecule type" value="Genomic_DNA"/>
</dbReference>
<dbReference type="EMBL" id="X91933">
    <property type="protein sequence ID" value="CAA63016.1"/>
    <property type="status" value="JOINED"/>
    <property type="molecule type" value="Genomic_DNA"/>
</dbReference>
<dbReference type="EMBL" id="X91934">
    <property type="protein sequence ID" value="CAA63016.1"/>
    <property type="status" value="JOINED"/>
    <property type="molecule type" value="Genomic_DNA"/>
</dbReference>
<dbReference type="EMBL" id="X91935">
    <property type="protein sequence ID" value="CAA63016.1"/>
    <property type="status" value="JOINED"/>
    <property type="molecule type" value="Genomic_DNA"/>
</dbReference>
<dbReference type="EMBL" id="X91936">
    <property type="protein sequence ID" value="CAA63016.1"/>
    <property type="status" value="JOINED"/>
    <property type="molecule type" value="Genomic_DNA"/>
</dbReference>
<dbReference type="EMBL" id="X91937">
    <property type="protein sequence ID" value="CAA63016.1"/>
    <property type="status" value="JOINED"/>
    <property type="molecule type" value="Genomic_DNA"/>
</dbReference>
<dbReference type="EMBL" id="X91938">
    <property type="protein sequence ID" value="CAA63016.1"/>
    <property type="status" value="JOINED"/>
    <property type="molecule type" value="Genomic_DNA"/>
</dbReference>
<dbReference type="EMBL" id="X91939">
    <property type="protein sequence ID" value="CAA63016.1"/>
    <property type="status" value="JOINED"/>
    <property type="molecule type" value="Genomic_DNA"/>
</dbReference>
<dbReference type="EMBL" id="AB031742">
    <property type="protein sequence ID" value="BAA83687.1"/>
    <property type="molecule type" value="mRNA"/>
</dbReference>
<dbReference type="EMBL" id="AK290656">
    <property type="protein sequence ID" value="BAF83345.1"/>
    <property type="molecule type" value="mRNA"/>
</dbReference>
<dbReference type="EMBL" id="AK304167">
    <property type="protein sequence ID" value="BAG65053.1"/>
    <property type="molecule type" value="mRNA"/>
</dbReference>
<dbReference type="EMBL" id="AY953519">
    <property type="protein sequence ID" value="AAX35820.1"/>
    <property type="status" value="ALT_SEQ"/>
    <property type="molecule type" value="Genomic_DNA"/>
</dbReference>
<dbReference type="EMBL" id="AL031005">
    <property type="status" value="NOT_ANNOTATED_CDS"/>
    <property type="molecule type" value="Genomic_DNA"/>
</dbReference>
<dbReference type="EMBL" id="AL031728">
    <property type="status" value="NOT_ANNOTATED_CDS"/>
    <property type="molecule type" value="Genomic_DNA"/>
</dbReference>
<dbReference type="EMBL" id="CH471134">
    <property type="protein sequence ID" value="EAW94959.1"/>
    <property type="molecule type" value="Genomic_DNA"/>
</dbReference>
<dbReference type="EMBL" id="CH471134">
    <property type="protein sequence ID" value="EAW94964.1"/>
    <property type="molecule type" value="Genomic_DNA"/>
</dbReference>
<dbReference type="EMBL" id="BC117256">
    <property type="protein sequence ID" value="AAI17257.1"/>
    <property type="molecule type" value="mRNA"/>
</dbReference>
<dbReference type="EMBL" id="BC126257">
    <property type="protein sequence ID" value="AAI26258.1"/>
    <property type="molecule type" value="mRNA"/>
</dbReference>
<dbReference type="EMBL" id="AJ130828">
    <property type="protein sequence ID" value="CAB46443.1"/>
    <property type="molecule type" value="mRNA"/>
</dbReference>
<dbReference type="EMBL" id="X98272">
    <property type="protein sequence ID" value="CAA66922.1"/>
    <property type="molecule type" value="mRNA"/>
</dbReference>
<dbReference type="EMBL" id="Z35307">
    <property type="protein sequence ID" value="CAA84548.1"/>
    <property type="status" value="ALT_INIT"/>
    <property type="molecule type" value="mRNA"/>
</dbReference>
<dbReference type="EMBL" id="AF018034">
    <property type="protein sequence ID" value="AAD21221.1"/>
    <property type="molecule type" value="Genomic_DNA"/>
</dbReference>
<dbReference type="CCDS" id="CCDS215.1">
    <molecule id="P42892-1"/>
</dbReference>
<dbReference type="CCDS" id="CCDS44081.1">
    <molecule id="P42892-3"/>
</dbReference>
<dbReference type="CCDS" id="CCDS44082.1">
    <molecule id="P42892-4"/>
</dbReference>
<dbReference type="CCDS" id="CCDS44083.1">
    <molecule id="P42892-2"/>
</dbReference>
<dbReference type="PIR" id="JC2521">
    <property type="entry name" value="JC2521"/>
</dbReference>
<dbReference type="PIR" id="JC4136">
    <property type="entry name" value="JC4136"/>
</dbReference>
<dbReference type="RefSeq" id="NP_001106818.1">
    <molecule id="P42892-2"/>
    <property type="nucleotide sequence ID" value="NM_001113347.2"/>
</dbReference>
<dbReference type="RefSeq" id="NP_001106819.1">
    <molecule id="P42892-3"/>
    <property type="nucleotide sequence ID" value="NM_001113348.2"/>
</dbReference>
<dbReference type="RefSeq" id="NP_001106820.1">
    <molecule id="P42892-4"/>
    <property type="nucleotide sequence ID" value="NM_001113349.2"/>
</dbReference>
<dbReference type="RefSeq" id="NP_001388.1">
    <molecule id="P42892-1"/>
    <property type="nucleotide sequence ID" value="NM_001397.3"/>
</dbReference>
<dbReference type="RefSeq" id="XP_006710461.1">
    <property type="nucleotide sequence ID" value="XM_006710398.2"/>
</dbReference>
<dbReference type="RefSeq" id="XP_011539175.1">
    <property type="nucleotide sequence ID" value="XM_011540873.2"/>
</dbReference>
<dbReference type="RefSeq" id="XP_016856000.1">
    <property type="nucleotide sequence ID" value="XM_017000511.1"/>
</dbReference>
<dbReference type="PDB" id="3DWB">
    <property type="method" value="X-ray"/>
    <property type="resolution" value="2.38 A"/>
    <property type="chains" value="A=101-770"/>
</dbReference>
<dbReference type="PDBsum" id="3DWB"/>
<dbReference type="SMR" id="P42892"/>
<dbReference type="BioGRID" id="108218">
    <property type="interactions" value="147"/>
</dbReference>
<dbReference type="FunCoup" id="P42892">
    <property type="interactions" value="531"/>
</dbReference>
<dbReference type="IntAct" id="P42892">
    <property type="interactions" value="72"/>
</dbReference>
<dbReference type="MINT" id="P42892"/>
<dbReference type="STRING" id="9606.ENSP00000364028"/>
<dbReference type="BindingDB" id="P42892"/>
<dbReference type="ChEMBL" id="CHEMBL4791"/>
<dbReference type="DrugBank" id="DB07171">
    <property type="generic name" value="5-(2-hydroxyethyl)nonane-1,9-diol"/>
</dbReference>
<dbReference type="DrugCentral" id="P42892"/>
<dbReference type="GuidetoPHARMACOLOGY" id="1615"/>
<dbReference type="MEROPS" id="M13.002"/>
<dbReference type="GlyConnect" id="1207">
    <property type="glycosylation" value="13 N-Linked glycans (7 sites)"/>
</dbReference>
<dbReference type="GlyCosmos" id="P42892">
    <property type="glycosylation" value="10 sites, 13 glycans"/>
</dbReference>
<dbReference type="GlyGen" id="P42892">
    <property type="glycosylation" value="16 sites, 48 N-linked glycans (8 sites), 1 O-linked glycan (2 sites)"/>
</dbReference>
<dbReference type="iPTMnet" id="P42892"/>
<dbReference type="PhosphoSitePlus" id="P42892"/>
<dbReference type="SwissPalm" id="P42892"/>
<dbReference type="BioMuta" id="ECE1"/>
<dbReference type="DMDM" id="1706563"/>
<dbReference type="jPOST" id="P42892"/>
<dbReference type="MassIVE" id="P42892"/>
<dbReference type="PaxDb" id="9606-ENSP00000364028"/>
<dbReference type="PeptideAtlas" id="P42892"/>
<dbReference type="ProteomicsDB" id="55562">
    <molecule id="P42892-1"/>
</dbReference>
<dbReference type="ProteomicsDB" id="55563">
    <molecule id="P42892-2"/>
</dbReference>
<dbReference type="ProteomicsDB" id="55564">
    <molecule id="P42892-3"/>
</dbReference>
<dbReference type="ProteomicsDB" id="55565">
    <molecule id="P42892-4"/>
</dbReference>
<dbReference type="Pumba" id="P42892"/>
<dbReference type="Antibodypedia" id="772">
    <property type="antibodies" value="407 antibodies from 34 providers"/>
</dbReference>
<dbReference type="DNASU" id="1889"/>
<dbReference type="Ensembl" id="ENST00000264205.10">
    <molecule id="P42892-4"/>
    <property type="protein sequence ID" value="ENSP00000264205.6"/>
    <property type="gene ID" value="ENSG00000117298.16"/>
</dbReference>
<dbReference type="Ensembl" id="ENST00000357071.8">
    <molecule id="P42892-2"/>
    <property type="protein sequence ID" value="ENSP00000349581.4"/>
    <property type="gene ID" value="ENSG00000117298.16"/>
</dbReference>
<dbReference type="Ensembl" id="ENST00000374893.11">
    <molecule id="P42892-1"/>
    <property type="protein sequence ID" value="ENSP00000364028.6"/>
    <property type="gene ID" value="ENSG00000117298.16"/>
</dbReference>
<dbReference type="Ensembl" id="ENST00000415912.6">
    <molecule id="P42892-3"/>
    <property type="protein sequence ID" value="ENSP00000405088.2"/>
    <property type="gene ID" value="ENSG00000117298.16"/>
</dbReference>
<dbReference type="GeneID" id="1889"/>
<dbReference type="KEGG" id="hsa:1889"/>
<dbReference type="MANE-Select" id="ENST00000374893.11">
    <property type="protein sequence ID" value="ENSP00000364028.6"/>
    <property type="RefSeq nucleotide sequence ID" value="NM_001397.3"/>
    <property type="RefSeq protein sequence ID" value="NP_001388.1"/>
</dbReference>
<dbReference type="UCSC" id="uc001bei.3">
    <molecule id="P42892-1"/>
    <property type="organism name" value="human"/>
</dbReference>
<dbReference type="AGR" id="HGNC:3146"/>
<dbReference type="CTD" id="1889"/>
<dbReference type="DisGeNET" id="1889"/>
<dbReference type="GeneCards" id="ECE1"/>
<dbReference type="HGNC" id="HGNC:3146">
    <property type="gene designation" value="ECE1"/>
</dbReference>
<dbReference type="HPA" id="ENSG00000117298">
    <property type="expression patterns" value="Low tissue specificity"/>
</dbReference>
<dbReference type="MalaCards" id="ECE1"/>
<dbReference type="MIM" id="600423">
    <property type="type" value="gene"/>
</dbReference>
<dbReference type="MIM" id="613870">
    <property type="type" value="phenotype"/>
</dbReference>
<dbReference type="neXtProt" id="NX_P42892"/>
<dbReference type="OpenTargets" id="ENSG00000117298"/>
<dbReference type="Orphanet" id="388">
    <property type="disease" value="Hirschsprung disease"/>
</dbReference>
<dbReference type="PharmGKB" id="PA27594"/>
<dbReference type="VEuPathDB" id="HostDB:ENSG00000117298"/>
<dbReference type="eggNOG" id="KOG3624">
    <property type="taxonomic scope" value="Eukaryota"/>
</dbReference>
<dbReference type="GeneTree" id="ENSGT00940000156050"/>
<dbReference type="HOGENOM" id="CLU_006187_8_0_1"/>
<dbReference type="InParanoid" id="P42892"/>
<dbReference type="OMA" id="DQRFFMN"/>
<dbReference type="OrthoDB" id="6475849at2759"/>
<dbReference type="PAN-GO" id="P42892">
    <property type="GO annotations" value="3 GO annotations based on evolutionary models"/>
</dbReference>
<dbReference type="PhylomeDB" id="P42892"/>
<dbReference type="TreeFam" id="TF315192"/>
<dbReference type="BRENDA" id="3.4.24.71">
    <property type="organism ID" value="2681"/>
</dbReference>
<dbReference type="PathwayCommons" id="P42892"/>
<dbReference type="Reactome" id="R-HSA-375276">
    <property type="pathway name" value="Peptide ligand-binding receptors"/>
</dbReference>
<dbReference type="SignaLink" id="P42892"/>
<dbReference type="SIGNOR" id="P42892"/>
<dbReference type="BioGRID-ORCS" id="1889">
    <property type="hits" value="4 hits in 1161 CRISPR screens"/>
</dbReference>
<dbReference type="ChiTaRS" id="ECE1">
    <property type="organism name" value="human"/>
</dbReference>
<dbReference type="EvolutionaryTrace" id="P42892"/>
<dbReference type="GeneWiki" id="Endothelin_converting_enzyme_1"/>
<dbReference type="GenomeRNAi" id="1889"/>
<dbReference type="Pharos" id="P42892">
    <property type="development level" value="Tchem"/>
</dbReference>
<dbReference type="PRO" id="PR:P42892"/>
<dbReference type="Proteomes" id="UP000005640">
    <property type="component" value="Chromosome 1"/>
</dbReference>
<dbReference type="RNAct" id="P42892">
    <property type="molecule type" value="protein"/>
</dbReference>
<dbReference type="Bgee" id="ENSG00000117298">
    <property type="expression patterns" value="Expressed in stromal cell of endometrium and 193 other cell types or tissues"/>
</dbReference>
<dbReference type="ExpressionAtlas" id="P42892">
    <property type="expression patterns" value="baseline and differential"/>
</dbReference>
<dbReference type="GO" id="GO:0005769">
    <property type="term" value="C:early endosome"/>
    <property type="evidence" value="ECO:0000314"/>
    <property type="project" value="BHF-UCL"/>
</dbReference>
<dbReference type="GO" id="GO:0005768">
    <property type="term" value="C:endosome"/>
    <property type="evidence" value="ECO:0000314"/>
    <property type="project" value="BHF-UCL"/>
</dbReference>
<dbReference type="GO" id="GO:0010008">
    <property type="term" value="C:endosome membrane"/>
    <property type="evidence" value="ECO:0000304"/>
    <property type="project" value="BHF-UCL"/>
</dbReference>
<dbReference type="GO" id="GO:0009897">
    <property type="term" value="C:external side of plasma membrane"/>
    <property type="evidence" value="ECO:0000314"/>
    <property type="project" value="BHF-UCL"/>
</dbReference>
<dbReference type="GO" id="GO:0070062">
    <property type="term" value="C:extracellular exosome"/>
    <property type="evidence" value="ECO:0007005"/>
    <property type="project" value="UniProtKB"/>
</dbReference>
<dbReference type="GO" id="GO:0005765">
    <property type="term" value="C:lysosomal membrane"/>
    <property type="evidence" value="ECO:0007005"/>
    <property type="project" value="UniProtKB"/>
</dbReference>
<dbReference type="GO" id="GO:0016020">
    <property type="term" value="C:membrane"/>
    <property type="evidence" value="ECO:0000314"/>
    <property type="project" value="BHF-UCL"/>
</dbReference>
<dbReference type="GO" id="GO:0048471">
    <property type="term" value="C:perinuclear region of cytoplasm"/>
    <property type="evidence" value="ECO:0000314"/>
    <property type="project" value="BHF-UCL"/>
</dbReference>
<dbReference type="GO" id="GO:0005886">
    <property type="term" value="C:plasma membrane"/>
    <property type="evidence" value="ECO:0000314"/>
    <property type="project" value="BHF-UCL"/>
</dbReference>
<dbReference type="GO" id="GO:0031982">
    <property type="term" value="C:vesicle"/>
    <property type="evidence" value="ECO:0000250"/>
    <property type="project" value="BHF-UCL"/>
</dbReference>
<dbReference type="GO" id="GO:0033093">
    <property type="term" value="C:Weibel-Palade body"/>
    <property type="evidence" value="ECO:0000314"/>
    <property type="project" value="BHF-UCL"/>
</dbReference>
<dbReference type="GO" id="GO:0004175">
    <property type="term" value="F:endopeptidase activity"/>
    <property type="evidence" value="ECO:0000314"/>
    <property type="project" value="BHF-UCL"/>
</dbReference>
<dbReference type="GO" id="GO:0004222">
    <property type="term" value="F:metalloendopeptidase activity"/>
    <property type="evidence" value="ECO:0000250"/>
    <property type="project" value="BHF-UCL"/>
</dbReference>
<dbReference type="GO" id="GO:0017046">
    <property type="term" value="F:peptide hormone binding"/>
    <property type="evidence" value="ECO:0000305"/>
    <property type="project" value="BHF-UCL"/>
</dbReference>
<dbReference type="GO" id="GO:0042803">
    <property type="term" value="F:protein homodimerization activity"/>
    <property type="evidence" value="ECO:0000353"/>
    <property type="project" value="BHF-UCL"/>
</dbReference>
<dbReference type="GO" id="GO:0008270">
    <property type="term" value="F:zinc ion binding"/>
    <property type="evidence" value="ECO:0000314"/>
    <property type="project" value="UniProtKB"/>
</dbReference>
<dbReference type="GO" id="GO:0060385">
    <property type="term" value="P:axonogenesis involved in innervation"/>
    <property type="evidence" value="ECO:0007669"/>
    <property type="project" value="Ensembl"/>
</dbReference>
<dbReference type="GO" id="GO:0010815">
    <property type="term" value="P:bradykinin catabolic process"/>
    <property type="evidence" value="ECO:0000314"/>
    <property type="project" value="BHF-UCL"/>
</dbReference>
<dbReference type="GO" id="GO:0010816">
    <property type="term" value="P:calcitonin catabolic process"/>
    <property type="evidence" value="ECO:0000314"/>
    <property type="project" value="BHF-UCL"/>
</dbReference>
<dbReference type="GO" id="GO:0043583">
    <property type="term" value="P:ear development"/>
    <property type="evidence" value="ECO:0000315"/>
    <property type="project" value="BHF-UCL"/>
</dbReference>
<dbReference type="GO" id="GO:0042733">
    <property type="term" value="P:embryonic digit morphogenesis"/>
    <property type="evidence" value="ECO:0000315"/>
    <property type="project" value="BHF-UCL"/>
</dbReference>
<dbReference type="GO" id="GO:0035050">
    <property type="term" value="P:embryonic heart tube development"/>
    <property type="evidence" value="ECO:0007669"/>
    <property type="project" value="Ensembl"/>
</dbReference>
<dbReference type="GO" id="GO:0034959">
    <property type="term" value="P:endothelin maturation"/>
    <property type="evidence" value="ECO:0000314"/>
    <property type="project" value="BHF-UCL"/>
</dbReference>
<dbReference type="GO" id="GO:0007186">
    <property type="term" value="P:G protein-coupled receptor signaling pathway"/>
    <property type="evidence" value="ECO:0000304"/>
    <property type="project" value="Reactome"/>
</dbReference>
<dbReference type="GO" id="GO:0007507">
    <property type="term" value="P:heart development"/>
    <property type="evidence" value="ECO:0000315"/>
    <property type="project" value="BHF-UCL"/>
</dbReference>
<dbReference type="GO" id="GO:0042447">
    <property type="term" value="P:hormone catabolic process"/>
    <property type="evidence" value="ECO:0000314"/>
    <property type="project" value="BHF-UCL"/>
</dbReference>
<dbReference type="GO" id="GO:0016486">
    <property type="term" value="P:peptide hormone processing"/>
    <property type="evidence" value="ECO:0000314"/>
    <property type="project" value="BHF-UCL"/>
</dbReference>
<dbReference type="GO" id="GO:0060037">
    <property type="term" value="P:pharyngeal system development"/>
    <property type="evidence" value="ECO:0007669"/>
    <property type="project" value="Ensembl"/>
</dbReference>
<dbReference type="GO" id="GO:0001921">
    <property type="term" value="P:positive regulation of receptor recycling"/>
    <property type="evidence" value="ECO:0000315"/>
    <property type="project" value="BHF-UCL"/>
</dbReference>
<dbReference type="GO" id="GO:0016485">
    <property type="term" value="P:protein processing"/>
    <property type="evidence" value="ECO:0000314"/>
    <property type="project" value="BHF-UCL"/>
</dbReference>
<dbReference type="GO" id="GO:0003100">
    <property type="term" value="P:regulation of systemic arterial blood pressure by endothelin"/>
    <property type="evidence" value="ECO:0000305"/>
    <property type="project" value="BHF-UCL"/>
</dbReference>
<dbReference type="GO" id="GO:0019229">
    <property type="term" value="P:regulation of vasoconstriction"/>
    <property type="evidence" value="ECO:0000305"/>
    <property type="project" value="BHF-UCL"/>
</dbReference>
<dbReference type="GO" id="GO:1902287">
    <property type="term" value="P:semaphorin-plexin signaling pathway involved in axon guidance"/>
    <property type="evidence" value="ECO:0007669"/>
    <property type="project" value="Ensembl"/>
</dbReference>
<dbReference type="GO" id="GO:0010814">
    <property type="term" value="P:substance P catabolic process"/>
    <property type="evidence" value="ECO:0000314"/>
    <property type="project" value="BHF-UCL"/>
</dbReference>
<dbReference type="GO" id="GO:0097492">
    <property type="term" value="P:sympathetic neuron axon guidance"/>
    <property type="evidence" value="ECO:0007669"/>
    <property type="project" value="Ensembl"/>
</dbReference>
<dbReference type="CDD" id="cd08662">
    <property type="entry name" value="M13"/>
    <property type="match status" value="1"/>
</dbReference>
<dbReference type="FunFam" id="3.40.390.10:FF:000003">
    <property type="entry name" value="endothelin-converting enzyme 1 isoform X1"/>
    <property type="match status" value="1"/>
</dbReference>
<dbReference type="FunFam" id="1.10.1380.10:FF:000001">
    <property type="entry name" value="endothelin-converting enzyme 2 isoform X1"/>
    <property type="match status" value="1"/>
</dbReference>
<dbReference type="Gene3D" id="3.40.390.10">
    <property type="entry name" value="Collagenase (Catalytic Domain)"/>
    <property type="match status" value="1"/>
</dbReference>
<dbReference type="Gene3D" id="1.10.1380.10">
    <property type="entry name" value="Neutral endopeptidase , domain2"/>
    <property type="match status" value="1"/>
</dbReference>
<dbReference type="InterPro" id="IPR024079">
    <property type="entry name" value="MetalloPept_cat_dom_sf"/>
</dbReference>
<dbReference type="InterPro" id="IPR000718">
    <property type="entry name" value="Peptidase_M13"/>
</dbReference>
<dbReference type="InterPro" id="IPR018497">
    <property type="entry name" value="Peptidase_M13_C"/>
</dbReference>
<dbReference type="InterPro" id="IPR042089">
    <property type="entry name" value="Peptidase_M13_dom_2"/>
</dbReference>
<dbReference type="InterPro" id="IPR008753">
    <property type="entry name" value="Peptidase_M13_N"/>
</dbReference>
<dbReference type="PANTHER" id="PTHR11733:SF130">
    <property type="entry name" value="ENDOTHELIN-CONVERTING ENZYME 1"/>
    <property type="match status" value="1"/>
</dbReference>
<dbReference type="PANTHER" id="PTHR11733">
    <property type="entry name" value="ZINC METALLOPROTEASE FAMILY M13 NEPRILYSIN-RELATED"/>
    <property type="match status" value="1"/>
</dbReference>
<dbReference type="Pfam" id="PF01431">
    <property type="entry name" value="Peptidase_M13"/>
    <property type="match status" value="1"/>
</dbReference>
<dbReference type="Pfam" id="PF05649">
    <property type="entry name" value="Peptidase_M13_N"/>
    <property type="match status" value="1"/>
</dbReference>
<dbReference type="PRINTS" id="PR00786">
    <property type="entry name" value="NEPRILYSIN"/>
</dbReference>
<dbReference type="SUPFAM" id="SSF55486">
    <property type="entry name" value="Metalloproteases ('zincins'), catalytic domain"/>
    <property type="match status" value="1"/>
</dbReference>
<dbReference type="PROSITE" id="PS51885">
    <property type="entry name" value="NEPRILYSIN"/>
    <property type="match status" value="1"/>
</dbReference>
<dbReference type="PROSITE" id="PS00142">
    <property type="entry name" value="ZINC_PROTEASE"/>
    <property type="match status" value="1"/>
</dbReference>
<sequence>MRGVWPPPVSALLSALGMSTYKRATLDEEDLVDSLSEGDAYPNGLQVNFHSPRSGQRCWAARTQVEKRLVVLVVLLAAGLVACLAALGIQYQTRSPSVCLSEACVSVTSSILSSMDPTVDPCHDFFSYACGGWIKANPVPDGHSRWGTFSNLWEHNQAIIKHLLENSTASVSEAERKAQVYYRACMNETRIEELRAKPLMELIERLGGWNITGPWAKDNFQDTLQVVTAHYRTSPFFSVYVSADSKNSNSNVIQVDQSGLGLPSRDYYLNKTENEKVLTGYLNYMVQLGKLLGGGDEEAIRPQMQQILDFETALANITIPQEKRRDEELIYHKVTAAELQTLAPAINWLPFLNTIFYPVEINESEPIVVYDKEYLEQISTLINTTDRCLLNNYMIWNLVRKTSSFLDQRFQDADEKFMEVMYGTKKTCLPRWKFCVSDTENNLGFALGPMFVKATFAEDSKSIATEIILEIKKAFEESLSTLKWMDEETRKSAKEKADAIYNMIGYPNFIMDPKELDKVFNDYTAVPDLYFENAMRFFNFSWRVTADQLRKAPNRDQWSMTPPMVNAYYSPTKNEIVFPAGILQAPFYTRSSPKALNFGGIGVVVGHELTHAFDDQGREYDKDGNLRPWWKNSSVEAFKRQTECMVEQYSNYSVNGEPVNGRHTLGENIADNGGLKAAYRAYQNWVKKNGAEHSLPTLGLTNNQLFFLGFAQVWCSVRTPESSHEGLITDPHSPSRFRVIGSLSNSKEFSEHFRCPPGSPMNPPHKCEVW</sequence>
<feature type="chain" id="PRO_0000078220" description="Endothelin-converting enzyme 1">
    <location>
        <begin position="1"/>
        <end position="770"/>
    </location>
</feature>
<feature type="topological domain" description="Cytoplasmic" evidence="2">
    <location>
        <begin position="1"/>
        <end position="68"/>
    </location>
</feature>
<feature type="transmembrane region" description="Helical; Signal-anchor for type II membrane protein" evidence="2">
    <location>
        <begin position="69"/>
        <end position="89"/>
    </location>
</feature>
<feature type="topological domain" description="Extracellular" evidence="2">
    <location>
        <begin position="90"/>
        <end position="770"/>
    </location>
</feature>
<feature type="domain" description="Peptidase M13" evidence="3">
    <location>
        <begin position="98"/>
        <end position="770"/>
    </location>
</feature>
<feature type="active site" evidence="3 4 21">
    <location>
        <position position="608"/>
    </location>
</feature>
<feature type="active site" description="Proton donor" evidence="3 21">
    <location>
        <position position="671"/>
    </location>
</feature>
<feature type="binding site" evidence="3 7">
    <location>
        <position position="607"/>
    </location>
    <ligand>
        <name>Zn(2+)</name>
        <dbReference type="ChEBI" id="CHEBI:29105"/>
        <note>catalytic</note>
    </ligand>
</feature>
<feature type="binding site" evidence="3 7">
    <location>
        <position position="611"/>
    </location>
    <ligand>
        <name>Zn(2+)</name>
        <dbReference type="ChEBI" id="CHEBI:29105"/>
        <note>catalytic</note>
    </ligand>
</feature>
<feature type="binding site" evidence="3 7">
    <location>
        <position position="667"/>
    </location>
    <ligand>
        <name>Zn(2+)</name>
        <dbReference type="ChEBI" id="CHEBI:29105"/>
        <note>catalytic</note>
    </ligand>
</feature>
<feature type="modified residue" description="Phosphothreonine" evidence="22">
    <location>
        <position position="25"/>
    </location>
</feature>
<feature type="glycosylation site" description="N-linked (GlcNAc...) asparagine" evidence="8 9">
    <location>
        <position position="166"/>
    </location>
</feature>
<feature type="glycosylation site" description="N-linked (GlcNAc...) asparagine" evidence="2">
    <location>
        <position position="187"/>
    </location>
</feature>
<feature type="glycosylation site" description="N-linked (GlcNAc...) asparagine" evidence="6 8 9">
    <location>
        <position position="210"/>
    </location>
</feature>
<feature type="glycosylation site" description="N-linked (GlcNAc...) asparagine" evidence="8">
    <location>
        <position position="270"/>
    </location>
</feature>
<feature type="glycosylation site" description="N-linked (GlcNAc...) asparagine" evidence="8">
    <location>
        <position position="316"/>
    </location>
</feature>
<feature type="glycosylation site" description="N-linked (GlcNAc...) asparagine" evidence="9">
    <location>
        <position position="362"/>
    </location>
</feature>
<feature type="glycosylation site" description="N-linked (GlcNAc...) asparagine" evidence="9">
    <location>
        <position position="383"/>
    </location>
</feature>
<feature type="glycosylation site" description="N-linked (GlcNAc...) asparagine" evidence="2">
    <location>
        <position position="539"/>
    </location>
</feature>
<feature type="glycosylation site" description="N-linked (GlcNAc...) asparagine" evidence="2">
    <location>
        <position position="632"/>
    </location>
</feature>
<feature type="glycosylation site" description="N-linked (GlcNAc...) asparagine" evidence="2">
    <location>
        <position position="651"/>
    </location>
</feature>
<feature type="disulfide bond" evidence="3">
    <location>
        <begin position="99"/>
        <end position="104"/>
    </location>
</feature>
<feature type="disulfide bond" evidence="3">
    <location>
        <begin position="122"/>
        <end position="755"/>
    </location>
</feature>
<feature type="disulfide bond" evidence="3">
    <location>
        <begin position="130"/>
        <end position="715"/>
    </location>
</feature>
<feature type="disulfide bond" evidence="3">
    <location>
        <begin position="185"/>
        <end position="435"/>
    </location>
</feature>
<feature type="disulfide bond" evidence="3">
    <location>
        <begin position="644"/>
        <end position="767"/>
    </location>
</feature>
<feature type="splice variant" id="VSP_005502" description="In isoform A." evidence="16 17">
    <original>MRGVWPPPVSALLSALGMSTYKRATLDEEDLVDSLSEGDAYPNG</original>
    <variation>MPLQGLGLQRNPFLQGKRGPGLTSSPPLLPPS</variation>
    <location>
        <begin position="1"/>
        <end position="44"/>
    </location>
</feature>
<feature type="splice variant" id="VSP_005504" description="In isoform C." evidence="18 19">
    <original>MRGVWPPPVSALLSALG</original>
    <variation>M</variation>
    <location>
        <begin position="1"/>
        <end position="17"/>
    </location>
</feature>
<feature type="splice variant" id="VSP_005503" description="In isoform D." evidence="15">
    <original>MRGVWPPPVSALLSALG</original>
    <variation>MEALRESVLHLALQ</variation>
    <location>
        <begin position="1"/>
        <end position="17"/>
    </location>
</feature>
<feature type="sequence variant" id="VAR_011972" description="In dbSNP:rs1076669." evidence="14">
    <original>T</original>
    <variation>I</variation>
    <location>
        <position position="341"/>
    </location>
</feature>
<feature type="sequence variant" id="VAR_026747" description="In HCAD; dbSNP:rs3026906." evidence="13">
    <original>R</original>
    <variation>C</variation>
    <location>
        <position position="754"/>
    </location>
</feature>
<feature type="mutagenesis site" description="Abolishes dimerization." evidence="7">
    <original>C</original>
    <variation>S</variation>
    <location>
        <position position="428"/>
    </location>
</feature>
<feature type="helix" evidence="23">
    <location>
        <begin position="102"/>
        <end position="114"/>
    </location>
</feature>
<feature type="turn" evidence="23">
    <location>
        <begin position="121"/>
        <end position="123"/>
    </location>
</feature>
<feature type="helix" evidence="23">
    <location>
        <begin position="125"/>
        <end position="136"/>
    </location>
</feature>
<feature type="strand" evidence="23">
    <location>
        <begin position="144"/>
        <end position="147"/>
    </location>
</feature>
<feature type="helix" evidence="23">
    <location>
        <begin position="148"/>
        <end position="164"/>
    </location>
</feature>
<feature type="helix" evidence="23">
    <location>
        <begin position="173"/>
        <end position="186"/>
    </location>
</feature>
<feature type="helix" evidence="23">
    <location>
        <begin position="189"/>
        <end position="194"/>
    </location>
</feature>
<feature type="helix" evidence="23">
    <location>
        <begin position="197"/>
        <end position="205"/>
    </location>
</feature>
<feature type="helix" evidence="23">
    <location>
        <begin position="220"/>
        <end position="229"/>
    </location>
</feature>
<feature type="strand" evidence="23">
    <location>
        <begin position="235"/>
        <end position="244"/>
    </location>
</feature>
<feature type="strand" evidence="23">
    <location>
        <begin position="247"/>
        <end position="256"/>
    </location>
</feature>
<feature type="strand" evidence="23">
    <location>
        <begin position="261"/>
        <end position="264"/>
    </location>
</feature>
<feature type="helix" evidence="23">
    <location>
        <begin position="266"/>
        <end position="269"/>
    </location>
</feature>
<feature type="turn" evidence="23">
    <location>
        <begin position="270"/>
        <end position="273"/>
    </location>
</feature>
<feature type="helix" evidence="23">
    <location>
        <begin position="277"/>
        <end position="291"/>
    </location>
</feature>
<feature type="helix" evidence="23">
    <location>
        <begin position="297"/>
        <end position="317"/>
    </location>
</feature>
<feature type="helix" evidence="23">
    <location>
        <begin position="321"/>
        <end position="324"/>
    </location>
</feature>
<feature type="helix" evidence="23">
    <location>
        <begin position="327"/>
        <end position="330"/>
    </location>
</feature>
<feature type="strand" evidence="23">
    <location>
        <begin position="332"/>
        <end position="335"/>
    </location>
</feature>
<feature type="helix" evidence="23">
    <location>
        <begin position="336"/>
        <end position="342"/>
    </location>
</feature>
<feature type="helix" evidence="23">
    <location>
        <begin position="348"/>
        <end position="355"/>
    </location>
</feature>
<feature type="strand" evidence="23">
    <location>
        <begin position="366"/>
        <end position="370"/>
    </location>
</feature>
<feature type="helix" evidence="23">
    <location>
        <begin position="372"/>
        <end position="384"/>
    </location>
</feature>
<feature type="helix" evidence="23">
    <location>
        <begin position="387"/>
        <end position="402"/>
    </location>
</feature>
<feature type="helix" evidence="23">
    <location>
        <begin position="403"/>
        <end position="405"/>
    </location>
</feature>
<feature type="helix" evidence="23">
    <location>
        <begin position="408"/>
        <end position="418"/>
    </location>
</feature>
<feature type="helix" evidence="23">
    <location>
        <begin position="434"/>
        <end position="455"/>
    </location>
</feature>
<feature type="helix" evidence="23">
    <location>
        <begin position="458"/>
        <end position="479"/>
    </location>
</feature>
<feature type="helix" evidence="23">
    <location>
        <begin position="487"/>
        <end position="499"/>
    </location>
</feature>
<feature type="strand" evidence="23">
    <location>
        <begin position="501"/>
        <end position="506"/>
    </location>
</feature>
<feature type="helix" evidence="23">
    <location>
        <begin position="508"/>
        <end position="511"/>
    </location>
</feature>
<feature type="helix" evidence="23">
    <location>
        <begin position="513"/>
        <end position="520"/>
    </location>
</feature>
<feature type="helix" evidence="23">
    <location>
        <begin position="530"/>
        <end position="546"/>
    </location>
</feature>
<feature type="turn" evidence="23">
    <location>
        <begin position="547"/>
        <end position="550"/>
    </location>
</feature>
<feature type="strand" evidence="23">
    <location>
        <begin position="568"/>
        <end position="570"/>
    </location>
</feature>
<feature type="turn" evidence="23">
    <location>
        <begin position="571"/>
        <end position="574"/>
    </location>
</feature>
<feature type="strand" evidence="23">
    <location>
        <begin position="575"/>
        <end position="579"/>
    </location>
</feature>
<feature type="helix" evidence="23">
    <location>
        <begin position="580"/>
        <end position="582"/>
    </location>
</feature>
<feature type="turn" evidence="23">
    <location>
        <begin position="585"/>
        <end position="587"/>
    </location>
</feature>
<feature type="helix" evidence="23">
    <location>
        <begin position="594"/>
        <end position="599"/>
    </location>
</feature>
<feature type="helix" evidence="23">
    <location>
        <begin position="601"/>
        <end position="611"/>
    </location>
</feature>
<feature type="helix" evidence="23">
    <location>
        <begin position="617"/>
        <end position="619"/>
    </location>
</feature>
<feature type="helix" evidence="23">
    <location>
        <begin position="632"/>
        <end position="649"/>
    </location>
</feature>
<feature type="strand" evidence="23">
    <location>
        <begin position="653"/>
        <end position="658"/>
    </location>
</feature>
<feature type="turn" evidence="23">
    <location>
        <begin position="661"/>
        <end position="664"/>
    </location>
</feature>
<feature type="helix" evidence="23">
    <location>
        <begin position="665"/>
        <end position="689"/>
    </location>
</feature>
<feature type="strand" evidence="23">
    <location>
        <begin position="696"/>
        <end position="698"/>
    </location>
</feature>
<feature type="helix" evidence="23">
    <location>
        <begin position="702"/>
        <end position="713"/>
    </location>
</feature>
<feature type="strand" evidence="23">
    <location>
        <begin position="716"/>
        <end position="718"/>
    </location>
</feature>
<feature type="helix" evidence="23">
    <location>
        <begin position="720"/>
        <end position="729"/>
    </location>
</feature>
<feature type="helix" evidence="23">
    <location>
        <begin position="735"/>
        <end position="744"/>
    </location>
</feature>
<feature type="helix" evidence="23">
    <location>
        <begin position="747"/>
        <end position="753"/>
    </location>
</feature>
<keyword id="KW-0002">3D-structure</keyword>
<keyword id="KW-0025">Alternative splicing</keyword>
<keyword id="KW-1003">Cell membrane</keyword>
<keyword id="KW-0225">Disease variant</keyword>
<keyword id="KW-1015">Disulfide bond</keyword>
<keyword id="KW-0325">Glycoprotein</keyword>
<keyword id="KW-0367">Hirschsprung disease</keyword>
<keyword id="KW-0378">Hydrolase</keyword>
<keyword id="KW-0472">Membrane</keyword>
<keyword id="KW-0479">Metal-binding</keyword>
<keyword id="KW-0482">Metalloprotease</keyword>
<keyword id="KW-0597">Phosphoprotein</keyword>
<keyword id="KW-0645">Protease</keyword>
<keyword id="KW-1267">Proteomics identification</keyword>
<keyword id="KW-1185">Reference proteome</keyword>
<keyword id="KW-0735">Signal-anchor</keyword>
<keyword id="KW-0812">Transmembrane</keyword>
<keyword id="KW-1133">Transmembrane helix</keyword>
<keyword id="KW-0862">Zinc</keyword>
<accession>P42892</accession>
<accession>A8K3P1</accession>
<accession>B4E291</accession>
<accession>Q14217</accession>
<accession>Q17RN5</accession>
<accession>Q2Z2K8</accession>
<accession>Q58GE7</accession>
<accession>Q5THM5</accession>
<accession>Q5THM7</accession>
<accession>Q5THM8</accession>
<accession>Q9UJQ6</accession>
<accession>Q9UPF4</accession>
<accession>Q9UPM4</accession>
<accession>Q9Y501</accession>
<name>ECE1_HUMAN</name>
<protein>
    <recommendedName>
        <fullName>Endothelin-converting enzyme 1</fullName>
        <shortName>ECE-1</shortName>
        <ecNumber evidence="11">3.4.24.71</ecNumber>
    </recommendedName>
</protein>
<gene>
    <name type="primary">ECE1</name>
</gene>
<organism>
    <name type="scientific">Homo sapiens</name>
    <name type="common">Human</name>
    <dbReference type="NCBI Taxonomy" id="9606"/>
    <lineage>
        <taxon>Eukaryota</taxon>
        <taxon>Metazoa</taxon>
        <taxon>Chordata</taxon>
        <taxon>Craniata</taxon>
        <taxon>Vertebrata</taxon>
        <taxon>Euteleostomi</taxon>
        <taxon>Mammalia</taxon>
        <taxon>Eutheria</taxon>
        <taxon>Euarchontoglires</taxon>
        <taxon>Primates</taxon>
        <taxon>Haplorrhini</taxon>
        <taxon>Catarrhini</taxon>
        <taxon>Hominidae</taxon>
        <taxon>Homo</taxon>
    </lineage>
</organism>
<proteinExistence type="evidence at protein level"/>
<comment type="function">
    <text evidence="11 12">Converts big endothelin-1 to endothelin-1.</text>
</comment>
<comment type="catalytic activity">
    <reaction evidence="11">
        <text>Hydrolysis of the 21-Trp-|-Val-22 bond in big endothelin to form endothelin 1.</text>
        <dbReference type="EC" id="3.4.24.71"/>
    </reaction>
</comment>
<comment type="cofactor">
    <cofactor evidence="7">
        <name>Zn(2+)</name>
        <dbReference type="ChEBI" id="CHEBI:29105"/>
    </cofactor>
    <text evidence="7">Binds 1 zinc ion per subunit.</text>
</comment>
<comment type="activity regulation">
    <text evidence="10">Inhibited by phosphoramidon (PubMed:18992253). Activated by K49-P1-20, a twenty-residue synthetic peptide shortened from the snake B.asper myotoxin II (PubMed:26931059).</text>
</comment>
<comment type="subunit">
    <text evidence="1 7 11">Homodimer; disulfide-linked (PubMed:18992253). Interacts with PPP1R16B (By similarity). Interacts with TSPAN8; this interaction recruits the endothelin converting enzyme ECE1 to tetraspanin-enriched microdomains and positively modulates its enzymatic activity (PubMed:37835445).</text>
</comment>
<comment type="interaction">
    <interactant intactId="EBI-2859983">
        <id>P42892</id>
    </interactant>
    <interactant intactId="EBI-750020">
        <id>P49760</id>
        <label>CLK2</label>
    </interactant>
    <organismsDiffer>false</organismsDiffer>
    <experiments>6</experiments>
</comment>
<comment type="interaction">
    <interactant intactId="EBI-2859983">
        <id>P42892</id>
    </interactant>
    <interactant intactId="EBI-3867333">
        <id>A8MQ03</id>
        <label>CYSRT1</label>
    </interactant>
    <organismsDiffer>false</organismsDiffer>
    <experiments>3</experiments>
</comment>
<comment type="interaction">
    <interactant intactId="EBI-2859983">
        <id>P42892</id>
    </interactant>
    <interactant intactId="EBI-11749135">
        <id>Q8IUG1</id>
        <label>KRTAP1-3</label>
    </interactant>
    <organismsDiffer>false</organismsDiffer>
    <experiments>3</experiments>
</comment>
<comment type="interaction">
    <interactant intactId="EBI-2859983">
        <id>P42892</id>
    </interactant>
    <interactant intactId="EBI-10172150">
        <id>P60370</id>
        <label>KRTAP10-5</label>
    </interactant>
    <organismsDiffer>false</organismsDiffer>
    <experiments>3</experiments>
</comment>
<comment type="interaction">
    <interactant intactId="EBI-2859983">
        <id>P42892</id>
    </interactant>
    <interactant intactId="EBI-10171774">
        <id>P60410</id>
        <label>KRTAP10-8</label>
    </interactant>
    <organismsDiffer>false</organismsDiffer>
    <experiments>3</experiments>
</comment>
<comment type="subcellular location">
    <subcellularLocation>
        <location evidence="11">Cell membrane</location>
        <topology>Single-pass type II membrane protein</topology>
    </subcellularLocation>
</comment>
<comment type="alternative products">
    <event type="alternative splicing"/>
    <isoform>
        <id>P42892-1</id>
        <name>B</name>
        <sequence type="displayed"/>
    </isoform>
    <isoform>
        <id>P42892-2</id>
        <name>A</name>
        <sequence type="described" ref="VSP_005502"/>
    </isoform>
    <isoform>
        <id>P42892-3</id>
        <name>C</name>
        <sequence type="described" ref="VSP_005504"/>
    </isoform>
    <isoform>
        <id>P42892-4</id>
        <name>D</name>
        <sequence type="described" ref="VSP_005503"/>
    </isoform>
</comment>
<comment type="tissue specificity">
    <text evidence="5 12">All isoforms are expressed in umbilical vein endothelial cells, polynuclear neutrophils, fibroblasts, atrium cardiomyocytes and ventricles. Isoforms A, B and C are also expressed in placenta, lung, heart, adrenal gland and phaeochromocytoma; isoforms A and C in liver, testis and small intestine; isoform B, C and D in endothelial cells and umbilical vein smooth muscle cells; isoforms C and D in saphenous vein cells, and isoform C in kidney.</text>
</comment>
<comment type="disease" evidence="13">
    <disease id="DI-01748">
        <name>Hirschsprung disease, cardiac defects, and autonomic dysfunction</name>
        <acronym>HCAD</acronym>
        <description>A disorder characterized by skip-lesions Hirschsprung disease, craniofacial abnormalities and other dysmorphic features, cardiac defects including ductus arteriosus, small subaortic ventricular septal defect, small atrial septal defect, and autonomic dysfunction.</description>
        <dbReference type="MIM" id="613870"/>
    </disease>
    <text>The disease is caused by variants affecting the gene represented in this entry.</text>
</comment>
<comment type="similarity">
    <text evidence="3 20">Belongs to the peptidase M13 family.</text>
</comment>
<comment type="sequence caution" evidence="20">
    <conflict type="erroneous gene model prediction">
        <sequence resource="EMBL-CDS" id="AAX35820"/>
    </conflict>
</comment>
<comment type="sequence caution" evidence="20">
    <conflict type="erroneous initiation">
        <sequence resource="EMBL-CDS" id="CAA84548"/>
    </conflict>
    <text>Extended N-terminus.</text>
</comment>
<reference key="1">
    <citation type="journal article" date="1995" name="Biochem. Biophys. Res. Commun.">
        <title>Cloning and sequencing of a human endothelin converting enzyme in renal adenocarcinoma (ACHN) cells producing endothelin-2.</title>
        <authorList>
            <person name="Yorimitsu K."/>
            <person name="Moroi K."/>
            <person name="Inagaki N."/>
            <person name="Saito T."/>
            <person name="Masuda Y."/>
            <person name="Masaki T."/>
            <person name="Seino S."/>
            <person name="Kimura S."/>
        </authorList>
    </citation>
    <scope>NUCLEOTIDE SEQUENCE [MRNA] (ISOFORM B)</scope>
</reference>
<reference key="2">
    <citation type="journal article" date="1995" name="Biochem. Biophys. Res. Commun.">
        <title>Cloning and functional expression of human endothelin-converting enzyme cDNA.</title>
        <authorList>
            <person name="Shimada K."/>
            <person name="Matsushita Y."/>
            <person name="Wakabayashi K."/>
            <person name="Takahashi M."/>
            <person name="Matsubara A."/>
            <person name="Iijima Y."/>
            <person name="Tanzawa K."/>
        </authorList>
    </citation>
    <scope>NUCLEOTIDE SEQUENCE [MRNA] (ISOFORM A)</scope>
</reference>
<reference key="3">
    <citation type="journal article" date="1995" name="J. Biol. Chem.">
        <title>Organization of the gene encoding the human endothelin-converting enzyme (ECE-1).</title>
        <authorList>
            <person name="Valdenaire O."/>
            <person name="Rohrbacher E."/>
            <person name="Mattei M.-G."/>
        </authorList>
    </citation>
    <scope>NUCLEOTIDE SEQUENCE [GENOMIC DNA] (ISOFORMS A AND B)</scope>
    <source>
        <tissue>Placenta</tissue>
    </source>
</reference>
<reference key="4">
    <citation type="submission" date="1999-08" db="EMBL/GenBank/DDBJ databases">
        <title>Human endothelin-converting enzyme-1c.</title>
        <authorList>
            <person name="Takayanagi R."/>
        </authorList>
    </citation>
    <scope>NUCLEOTIDE SEQUENCE [MRNA] (ISOFORM C)</scope>
    <source>
        <tissue>Umbilical vein endothelial cell</tissue>
    </source>
</reference>
<reference key="5">
    <citation type="journal article" date="2004" name="Nat. Genet.">
        <title>Complete sequencing and characterization of 21,243 full-length human cDNAs.</title>
        <authorList>
            <person name="Ota T."/>
            <person name="Suzuki Y."/>
            <person name="Nishikawa T."/>
            <person name="Otsuki T."/>
            <person name="Sugiyama T."/>
            <person name="Irie R."/>
            <person name="Wakamatsu A."/>
            <person name="Hayashi K."/>
            <person name="Sato H."/>
            <person name="Nagai K."/>
            <person name="Kimura K."/>
            <person name="Makita H."/>
            <person name="Sekine M."/>
            <person name="Obayashi M."/>
            <person name="Nishi T."/>
            <person name="Shibahara T."/>
            <person name="Tanaka T."/>
            <person name="Ishii S."/>
            <person name="Yamamoto J."/>
            <person name="Saito K."/>
            <person name="Kawai Y."/>
            <person name="Isono Y."/>
            <person name="Nakamura Y."/>
            <person name="Nagahari K."/>
            <person name="Murakami K."/>
            <person name="Yasuda T."/>
            <person name="Iwayanagi T."/>
            <person name="Wagatsuma M."/>
            <person name="Shiratori A."/>
            <person name="Sudo H."/>
            <person name="Hosoiri T."/>
            <person name="Kaku Y."/>
            <person name="Kodaira H."/>
            <person name="Kondo H."/>
            <person name="Sugawara M."/>
            <person name="Takahashi M."/>
            <person name="Kanda K."/>
            <person name="Yokoi T."/>
            <person name="Furuya T."/>
            <person name="Kikkawa E."/>
            <person name="Omura Y."/>
            <person name="Abe K."/>
            <person name="Kamihara K."/>
            <person name="Katsuta N."/>
            <person name="Sato K."/>
            <person name="Tanikawa M."/>
            <person name="Yamazaki M."/>
            <person name="Ninomiya K."/>
            <person name="Ishibashi T."/>
            <person name="Yamashita H."/>
            <person name="Murakawa K."/>
            <person name="Fujimori K."/>
            <person name="Tanai H."/>
            <person name="Kimata M."/>
            <person name="Watanabe M."/>
            <person name="Hiraoka S."/>
            <person name="Chiba Y."/>
            <person name="Ishida S."/>
            <person name="Ono Y."/>
            <person name="Takiguchi S."/>
            <person name="Watanabe S."/>
            <person name="Yosida M."/>
            <person name="Hotuta T."/>
            <person name="Kusano J."/>
            <person name="Kanehori K."/>
            <person name="Takahashi-Fujii A."/>
            <person name="Hara H."/>
            <person name="Tanase T.-O."/>
            <person name="Nomura Y."/>
            <person name="Togiya S."/>
            <person name="Komai F."/>
            <person name="Hara R."/>
            <person name="Takeuchi K."/>
            <person name="Arita M."/>
            <person name="Imose N."/>
            <person name="Musashino K."/>
            <person name="Yuuki H."/>
            <person name="Oshima A."/>
            <person name="Sasaki N."/>
            <person name="Aotsuka S."/>
            <person name="Yoshikawa Y."/>
            <person name="Matsunawa H."/>
            <person name="Ichihara T."/>
            <person name="Shiohata N."/>
            <person name="Sano S."/>
            <person name="Moriya S."/>
            <person name="Momiyama H."/>
            <person name="Satoh N."/>
            <person name="Takami S."/>
            <person name="Terashima Y."/>
            <person name="Suzuki O."/>
            <person name="Nakagawa S."/>
            <person name="Senoh A."/>
            <person name="Mizoguchi H."/>
            <person name="Goto Y."/>
            <person name="Shimizu F."/>
            <person name="Wakebe H."/>
            <person name="Hishigaki H."/>
            <person name="Watanabe T."/>
            <person name="Sugiyama A."/>
            <person name="Takemoto M."/>
            <person name="Kawakami B."/>
            <person name="Yamazaki M."/>
            <person name="Watanabe K."/>
            <person name="Kumagai A."/>
            <person name="Itakura S."/>
            <person name="Fukuzumi Y."/>
            <person name="Fujimori Y."/>
            <person name="Komiyama M."/>
            <person name="Tashiro H."/>
            <person name="Tanigami A."/>
            <person name="Fujiwara T."/>
            <person name="Ono T."/>
            <person name="Yamada K."/>
            <person name="Fujii Y."/>
            <person name="Ozaki K."/>
            <person name="Hirao M."/>
            <person name="Ohmori Y."/>
            <person name="Kawabata A."/>
            <person name="Hikiji T."/>
            <person name="Kobatake N."/>
            <person name="Inagaki H."/>
            <person name="Ikema Y."/>
            <person name="Okamoto S."/>
            <person name="Okitani R."/>
            <person name="Kawakami T."/>
            <person name="Noguchi S."/>
            <person name="Itoh T."/>
            <person name="Shigeta K."/>
            <person name="Senba T."/>
            <person name="Matsumura K."/>
            <person name="Nakajima Y."/>
            <person name="Mizuno T."/>
            <person name="Morinaga M."/>
            <person name="Sasaki M."/>
            <person name="Togashi T."/>
            <person name="Oyama M."/>
            <person name="Hata H."/>
            <person name="Watanabe M."/>
            <person name="Komatsu T."/>
            <person name="Mizushima-Sugano J."/>
            <person name="Satoh T."/>
            <person name="Shirai Y."/>
            <person name="Takahashi Y."/>
            <person name="Nakagawa K."/>
            <person name="Okumura K."/>
            <person name="Nagase T."/>
            <person name="Nomura N."/>
            <person name="Kikuchi H."/>
            <person name="Masuho Y."/>
            <person name="Yamashita R."/>
            <person name="Nakai K."/>
            <person name="Yada T."/>
            <person name="Nakamura Y."/>
            <person name="Ohara O."/>
            <person name="Isogai T."/>
            <person name="Sugano S."/>
        </authorList>
    </citation>
    <scope>NUCLEOTIDE SEQUENCE [LARGE SCALE MRNA] (ISOFORM B)</scope>
    <source>
        <tissue>Trachea</tissue>
    </source>
</reference>
<reference key="6">
    <citation type="submission" date="2005-03" db="EMBL/GenBank/DDBJ databases">
        <authorList>
            <consortium name="NIEHS SNPs program"/>
        </authorList>
    </citation>
    <scope>NUCLEOTIDE SEQUENCE [GENOMIC DNA]</scope>
    <scope>VARIANT ILE-341</scope>
</reference>
<reference key="7">
    <citation type="journal article" date="2006" name="Nature">
        <title>The DNA sequence and biological annotation of human chromosome 1.</title>
        <authorList>
            <person name="Gregory S.G."/>
            <person name="Barlow K.F."/>
            <person name="McLay K.E."/>
            <person name="Kaul R."/>
            <person name="Swarbreck D."/>
            <person name="Dunham A."/>
            <person name="Scott C.E."/>
            <person name="Howe K.L."/>
            <person name="Woodfine K."/>
            <person name="Spencer C.C.A."/>
            <person name="Jones M.C."/>
            <person name="Gillson C."/>
            <person name="Searle S."/>
            <person name="Zhou Y."/>
            <person name="Kokocinski F."/>
            <person name="McDonald L."/>
            <person name="Evans R."/>
            <person name="Phillips K."/>
            <person name="Atkinson A."/>
            <person name="Cooper R."/>
            <person name="Jones C."/>
            <person name="Hall R.E."/>
            <person name="Andrews T.D."/>
            <person name="Lloyd C."/>
            <person name="Ainscough R."/>
            <person name="Almeida J.P."/>
            <person name="Ambrose K.D."/>
            <person name="Anderson F."/>
            <person name="Andrew R.W."/>
            <person name="Ashwell R.I.S."/>
            <person name="Aubin K."/>
            <person name="Babbage A.K."/>
            <person name="Bagguley C.L."/>
            <person name="Bailey J."/>
            <person name="Beasley H."/>
            <person name="Bethel G."/>
            <person name="Bird C.P."/>
            <person name="Bray-Allen S."/>
            <person name="Brown J.Y."/>
            <person name="Brown A.J."/>
            <person name="Buckley D."/>
            <person name="Burton J."/>
            <person name="Bye J."/>
            <person name="Carder C."/>
            <person name="Chapman J.C."/>
            <person name="Clark S.Y."/>
            <person name="Clarke G."/>
            <person name="Clee C."/>
            <person name="Cobley V."/>
            <person name="Collier R.E."/>
            <person name="Corby N."/>
            <person name="Coville G.J."/>
            <person name="Davies J."/>
            <person name="Deadman R."/>
            <person name="Dunn M."/>
            <person name="Earthrowl M."/>
            <person name="Ellington A.G."/>
            <person name="Errington H."/>
            <person name="Frankish A."/>
            <person name="Frankland J."/>
            <person name="French L."/>
            <person name="Garner P."/>
            <person name="Garnett J."/>
            <person name="Gay L."/>
            <person name="Ghori M.R.J."/>
            <person name="Gibson R."/>
            <person name="Gilby L.M."/>
            <person name="Gillett W."/>
            <person name="Glithero R.J."/>
            <person name="Grafham D.V."/>
            <person name="Griffiths C."/>
            <person name="Griffiths-Jones S."/>
            <person name="Grocock R."/>
            <person name="Hammond S."/>
            <person name="Harrison E.S.I."/>
            <person name="Hart E."/>
            <person name="Haugen E."/>
            <person name="Heath P.D."/>
            <person name="Holmes S."/>
            <person name="Holt K."/>
            <person name="Howden P.J."/>
            <person name="Hunt A.R."/>
            <person name="Hunt S.E."/>
            <person name="Hunter G."/>
            <person name="Isherwood J."/>
            <person name="James R."/>
            <person name="Johnson C."/>
            <person name="Johnson D."/>
            <person name="Joy A."/>
            <person name="Kay M."/>
            <person name="Kershaw J.K."/>
            <person name="Kibukawa M."/>
            <person name="Kimberley A.M."/>
            <person name="King A."/>
            <person name="Knights A.J."/>
            <person name="Lad H."/>
            <person name="Laird G."/>
            <person name="Lawlor S."/>
            <person name="Leongamornlert D.A."/>
            <person name="Lloyd D.M."/>
            <person name="Loveland J."/>
            <person name="Lovell J."/>
            <person name="Lush M.J."/>
            <person name="Lyne R."/>
            <person name="Martin S."/>
            <person name="Mashreghi-Mohammadi M."/>
            <person name="Matthews L."/>
            <person name="Matthews N.S.W."/>
            <person name="McLaren S."/>
            <person name="Milne S."/>
            <person name="Mistry S."/>
            <person name="Moore M.J.F."/>
            <person name="Nickerson T."/>
            <person name="O'Dell C.N."/>
            <person name="Oliver K."/>
            <person name="Palmeiri A."/>
            <person name="Palmer S.A."/>
            <person name="Parker A."/>
            <person name="Patel D."/>
            <person name="Pearce A.V."/>
            <person name="Peck A.I."/>
            <person name="Pelan S."/>
            <person name="Phelps K."/>
            <person name="Phillimore B.J."/>
            <person name="Plumb R."/>
            <person name="Rajan J."/>
            <person name="Raymond C."/>
            <person name="Rouse G."/>
            <person name="Saenphimmachak C."/>
            <person name="Sehra H.K."/>
            <person name="Sheridan E."/>
            <person name="Shownkeen R."/>
            <person name="Sims S."/>
            <person name="Skuce C.D."/>
            <person name="Smith M."/>
            <person name="Steward C."/>
            <person name="Subramanian S."/>
            <person name="Sycamore N."/>
            <person name="Tracey A."/>
            <person name="Tromans A."/>
            <person name="Van Helmond Z."/>
            <person name="Wall M."/>
            <person name="Wallis J.M."/>
            <person name="White S."/>
            <person name="Whitehead S.L."/>
            <person name="Wilkinson J.E."/>
            <person name="Willey D.L."/>
            <person name="Williams H."/>
            <person name="Wilming L."/>
            <person name="Wray P.W."/>
            <person name="Wu Z."/>
            <person name="Coulson A."/>
            <person name="Vaudin M."/>
            <person name="Sulston J.E."/>
            <person name="Durbin R.M."/>
            <person name="Hubbard T."/>
            <person name="Wooster R."/>
            <person name="Dunham I."/>
            <person name="Carter N.P."/>
            <person name="McVean G."/>
            <person name="Ross M.T."/>
            <person name="Harrow J."/>
            <person name="Olson M.V."/>
            <person name="Beck S."/>
            <person name="Rogers J."/>
            <person name="Bentley D.R."/>
        </authorList>
    </citation>
    <scope>NUCLEOTIDE SEQUENCE [LARGE SCALE GENOMIC DNA]</scope>
</reference>
<reference key="8">
    <citation type="submission" date="2005-07" db="EMBL/GenBank/DDBJ databases">
        <authorList>
            <person name="Mural R.J."/>
            <person name="Istrail S."/>
            <person name="Sutton G.G."/>
            <person name="Florea L."/>
            <person name="Halpern A.L."/>
            <person name="Mobarry C.M."/>
            <person name="Lippert R."/>
            <person name="Walenz B."/>
            <person name="Shatkay H."/>
            <person name="Dew I."/>
            <person name="Miller J.R."/>
            <person name="Flanigan M.J."/>
            <person name="Edwards N.J."/>
            <person name="Bolanos R."/>
            <person name="Fasulo D."/>
            <person name="Halldorsson B.V."/>
            <person name="Hannenhalli S."/>
            <person name="Turner R."/>
            <person name="Yooseph S."/>
            <person name="Lu F."/>
            <person name="Nusskern D.R."/>
            <person name="Shue B.C."/>
            <person name="Zheng X.H."/>
            <person name="Zhong F."/>
            <person name="Delcher A.L."/>
            <person name="Huson D.H."/>
            <person name="Kravitz S.A."/>
            <person name="Mouchard L."/>
            <person name="Reinert K."/>
            <person name="Remington K.A."/>
            <person name="Clark A.G."/>
            <person name="Waterman M.S."/>
            <person name="Eichler E.E."/>
            <person name="Adams M.D."/>
            <person name="Hunkapiller M.W."/>
            <person name="Myers E.W."/>
            <person name="Venter J.C."/>
        </authorList>
    </citation>
    <scope>NUCLEOTIDE SEQUENCE [LARGE SCALE GENOMIC DNA]</scope>
</reference>
<reference key="9">
    <citation type="journal article" date="2004" name="Genome Res.">
        <title>The status, quality, and expansion of the NIH full-length cDNA project: the Mammalian Gene Collection (MGC).</title>
        <authorList>
            <consortium name="The MGC Project Team"/>
        </authorList>
    </citation>
    <scope>NUCLEOTIDE SEQUENCE [LARGE SCALE MRNA] (ISOFORM A)</scope>
    <source>
        <tissue>Brain</tissue>
    </source>
</reference>
<reference key="10">
    <citation type="journal article" date="1999" name="Eur. J. Biochem.">
        <title>A fourth isoform of endothelin-converting enzyme (ECE-1) is generated from an additional promoter.</title>
        <authorList>
            <person name="Valdenaire O."/>
            <person name="Lepailleur-Enouf D."/>
            <person name="Egidy G."/>
            <person name="Thouard A."/>
            <person name="Barret A."/>
            <person name="Vranckx R."/>
            <person name="Tougard C."/>
            <person name="Michel J.-B."/>
        </authorList>
    </citation>
    <scope>NUCLEOTIDE SEQUENCE [MRNA] OF 1-132 (ISOFORM D)</scope>
    <scope>TISSUE SPECIFICITY</scope>
</reference>
<reference key="11">
    <citation type="journal article" date="1997" name="Biochem. J.">
        <title>Human endothelin-converting enzyme (ECE-1): three isoforms with distinct subcellular localizations.</title>
        <authorList>
            <person name="Schweizer A."/>
            <person name="Valdenaire O."/>
            <person name="Nelboeck P."/>
            <person name="Deuschle U."/>
            <person name="Dumas Milne Edwards J.B."/>
            <person name="Stumpf J.G."/>
            <person name="Loeffler B.-M."/>
        </authorList>
    </citation>
    <scope>NUCLEOTIDE SEQUENCE [MRNA] OF 1-103 (ISOFORM C)</scope>
    <scope>FUNCTION</scope>
    <scope>TISSUE SPECIFICITY</scope>
    <source>
        <tissue>Umbilical vein endothelial cell</tissue>
    </source>
</reference>
<reference key="12">
    <citation type="journal article" date="1994" name="FEBS Lett.">
        <title>Molecular characterization of human and bovine endothelin converting enzyme (ECE-1).</title>
        <authorList>
            <person name="Schmidt M."/>
            <person name="Kroeger B."/>
            <person name="Jacob E."/>
            <person name="Seulberger H."/>
            <person name="Subkowski T."/>
            <person name="Otter R."/>
            <person name="Meyer T."/>
            <person name="Schmalzing G."/>
            <person name="Hillen H."/>
        </authorList>
    </citation>
    <scope>NUCLEOTIDE SEQUENCE [MRNA] OF 7-770 (ISOFORM B)</scope>
    <source>
        <tissue>Placenta</tissue>
    </source>
</reference>
<reference key="13">
    <citation type="submission" date="1997-08" db="EMBL/GenBank/DDBJ databases">
        <title>Characterization of the human endothelin converting enzyme-1 gene (ECE-1): genomic structure and chromosomal localization.</title>
        <authorList>
            <person name="Flowers M.A."/>
            <person name="Tai S.C."/>
            <person name="Baluyut C.A."/>
            <person name="Cheung A.H."/>
            <person name="Kau C.L."/>
            <person name="Wong G.K.T."/>
            <person name="Marsden P.A."/>
        </authorList>
    </citation>
    <scope>NUCLEOTIDE SEQUENCE [GENOMIC DNA] OF 713-770</scope>
</reference>
<reference key="14">
    <citation type="journal article" date="2006" name="Cell">
        <title>Global, in vivo, and site-specific phosphorylation dynamics in signaling networks.</title>
        <authorList>
            <person name="Olsen J.V."/>
            <person name="Blagoev B."/>
            <person name="Gnad F."/>
            <person name="Macek B."/>
            <person name="Kumar C."/>
            <person name="Mortensen P."/>
            <person name="Mann M."/>
        </authorList>
    </citation>
    <scope>IDENTIFICATION BY MASS SPECTROMETRY [LARGE SCALE ANALYSIS]</scope>
    <source>
        <tissue>Cervix carcinoma</tissue>
    </source>
</reference>
<reference key="15">
    <citation type="journal article" date="2006" name="Mol. Cell. Proteomics">
        <title>Elucidation of N-glycosylation sites on human platelet proteins: a glycoproteomic approach.</title>
        <authorList>
            <person name="Lewandrowski U."/>
            <person name="Moebius J."/>
            <person name="Walter U."/>
            <person name="Sickmann A."/>
        </authorList>
    </citation>
    <scope>GLYCOSYLATION [LARGE SCALE ANALYSIS] AT ASN-210</scope>
    <source>
        <tissue>Platelet</tissue>
    </source>
</reference>
<reference key="16">
    <citation type="journal article" date="2008" name="Proc. Natl. Acad. Sci. U.S.A.">
        <title>A quantitative atlas of mitotic phosphorylation.</title>
        <authorList>
            <person name="Dephoure N."/>
            <person name="Zhou C."/>
            <person name="Villen J."/>
            <person name="Beausoleil S.A."/>
            <person name="Bakalarski C.E."/>
            <person name="Elledge S.J."/>
            <person name="Gygi S.P."/>
        </authorList>
    </citation>
    <scope>IDENTIFICATION BY MASS SPECTROMETRY [LARGE SCALE ANALYSIS]</scope>
    <source>
        <tissue>Cervix carcinoma</tissue>
    </source>
</reference>
<reference key="17">
    <citation type="journal article" date="2009" name="J. Proteome Res.">
        <title>Glycoproteomics analysis of human liver tissue by combination of multiple enzyme digestion and hydrazide chemistry.</title>
        <authorList>
            <person name="Chen R."/>
            <person name="Jiang X."/>
            <person name="Sun D."/>
            <person name="Han G."/>
            <person name="Wang F."/>
            <person name="Ye M."/>
            <person name="Wang L."/>
            <person name="Zou H."/>
        </authorList>
    </citation>
    <scope>GLYCOSYLATION [LARGE SCALE ANALYSIS] AT ASN-166; ASN-210; ASN-270 AND ASN-316</scope>
    <source>
        <tissue>Liver</tissue>
    </source>
</reference>
<reference key="18">
    <citation type="journal article" date="2009" name="Nat. Biotechnol.">
        <title>Mass-spectrometric identification and relative quantification of N-linked cell surface glycoproteins.</title>
        <authorList>
            <person name="Wollscheid B."/>
            <person name="Bausch-Fluck D."/>
            <person name="Henderson C."/>
            <person name="O'Brien R."/>
            <person name="Bibel M."/>
            <person name="Schiess R."/>
            <person name="Aebersold R."/>
            <person name="Watts J.D."/>
        </authorList>
    </citation>
    <scope>GLYCOSYLATION [LARGE SCALE ANALYSIS] AT ASN-166; ASN-210; ASN-362 AND ASN-383</scope>
    <source>
        <tissue>Leukemic T-cell</tissue>
    </source>
</reference>
<reference key="19">
    <citation type="journal article" date="2009" name="Sci. Signal.">
        <title>Quantitative phosphoproteomic analysis of T cell receptor signaling reveals system-wide modulation of protein-protein interactions.</title>
        <authorList>
            <person name="Mayya V."/>
            <person name="Lundgren D.H."/>
            <person name="Hwang S.-I."/>
            <person name="Rezaul K."/>
            <person name="Wu L."/>
            <person name="Eng J.K."/>
            <person name="Rodionov V."/>
            <person name="Han D.K."/>
        </authorList>
    </citation>
    <scope>PHOSPHORYLATION [LARGE SCALE ANALYSIS] AT THR-25</scope>
    <scope>IDENTIFICATION BY MASS SPECTROMETRY [LARGE SCALE ANALYSIS]</scope>
    <source>
        <tissue>Leukemic T-cell</tissue>
    </source>
</reference>
<reference key="20">
    <citation type="journal article" date="2011" name="BMC Syst. Biol.">
        <title>Initial characterization of the human central proteome.</title>
        <authorList>
            <person name="Burkard T.R."/>
            <person name="Planyavsky M."/>
            <person name="Kaupe I."/>
            <person name="Breitwieser F.P."/>
            <person name="Buerckstuemmer T."/>
            <person name="Bennett K.L."/>
            <person name="Superti-Furga G."/>
            <person name="Colinge J."/>
        </authorList>
    </citation>
    <scope>IDENTIFICATION BY MASS SPECTROMETRY [LARGE SCALE ANALYSIS]</scope>
</reference>
<reference key="21">
    <citation type="journal article" date="2015" name="Proteomics">
        <title>N-terminome analysis of the human mitochondrial proteome.</title>
        <authorList>
            <person name="Vaca Jacome A.S."/>
            <person name="Rabilloud T."/>
            <person name="Schaeffer-Reiss C."/>
            <person name="Rompais M."/>
            <person name="Ayoub D."/>
            <person name="Lane L."/>
            <person name="Bairoch A."/>
            <person name="Van Dorsselaer A."/>
            <person name="Carapito C."/>
        </authorList>
    </citation>
    <scope>IDENTIFICATION BY MASS SPECTROMETRY [LARGE SCALE ANALYSIS]</scope>
</reference>
<reference key="22">
    <citation type="journal article" date="2016" name="Sci. Rep.">
        <title>N-terminal domain of Bothrops asper Myotoxin II enhances the activity of endothelin converting enzyme-1 and neprilysin.</title>
        <authorList>
            <person name="Smith A.I."/>
            <person name="Rajapakse N.W."/>
            <person name="Kleifeld O."/>
            <person name="Lomonte B."/>
            <person name="Sikanyika N.L."/>
            <person name="Spicer A.J."/>
            <person name="Hodgson W.C."/>
            <person name="Conroy P.J."/>
            <person name="Small D.H."/>
            <person name="Kaye D.M."/>
            <person name="Parkington H.C."/>
            <person name="Whisstock J.C."/>
            <person name="Kuruppu S."/>
        </authorList>
    </citation>
    <scope>ACTIVITY REGULATION</scope>
</reference>
<reference key="23">
    <citation type="journal article" date="2016" name="Sci. Rep.">
        <title>Corrigendum: N-terminal domain of Bothrops asper Myotoxin II enhances the activity of endothelin converting enzyme-1 and neprilysin.</title>
        <authorList>
            <person name="Smith A.I."/>
            <person name="Rajapakse N.W."/>
            <person name="Kleifeld O."/>
            <person name="Lomonte B."/>
            <person name="Sikanyika N.L."/>
            <person name="Spicer A.J."/>
            <person name="Hodgson W.C."/>
            <person name="Conroy P.J."/>
            <person name="Small D.H."/>
            <person name="Kaye D.M."/>
            <person name="Parkington H.C."/>
            <person name="Whisstock J.C."/>
            <person name="Kuruppu S."/>
        </authorList>
    </citation>
    <scope>ERRATUM OF PUBMED:26931059</scope>
</reference>
<reference key="24">
    <citation type="journal article" date="2023" name="Cancers">
        <title>The Tetraspanin Tspan8 Associates with Endothelin Converting Enzyme ECE1 and Regulates Its Activity.</title>
        <authorList>
            <person name="Zhu Y."/>
            <person name="Saint-Pol J."/>
            <person name="Nguyen V."/>
            <person name="Rubinstein E."/>
            <person name="Boucheix C."/>
            <person name="Greco C."/>
        </authorList>
    </citation>
    <scope>FUNCTION</scope>
    <scope>CATALYTIC ACTIVITY</scope>
    <scope>INTERACTION WITH TSPAN8</scope>
    <scope>SUBCELLULAR LOCATION</scope>
</reference>
<reference key="25">
    <citation type="journal article" date="2009" name="J. Mol. Biol.">
        <title>Structure of human endothelin-converting enzyme I complexed with phosphoramidon.</title>
        <authorList>
            <person name="Schulz H."/>
            <person name="Dale G.E."/>
            <person name="Karimi-Nejad Y."/>
            <person name="Oefner C."/>
        </authorList>
    </citation>
    <scope>X-RAY CRYSTALLOGRAPHY (2.38 ANGSTROMS) OF 101-770 OF MUTANT SER-428 IN COMPLEX WITH ZINC IONS AND PHOSPHORAMIDON</scope>
    <scope>COFACTOR</scope>
    <scope>SUBUNIT</scope>
    <scope>MUTAGENESIS OF CYS-428</scope>
</reference>
<reference key="26">
    <citation type="journal article" date="1999" name="Am. J. Hum. Genet.">
        <title>A loss-of-function mutation in the endothelin-converting enzyme 1 (ECE-1) associated with Hirschsprung disease, cardiac defects, and autonomic dysfunction.</title>
        <authorList>
            <person name="Hofstra R.M.W."/>
            <person name="Valdenaire O."/>
            <person name="Arch E."/>
            <person name="Osinga J."/>
            <person name="Kroes H."/>
            <person name="Loffler B.-M."/>
            <person name="Hamosh A."/>
            <person name="Meijers C."/>
            <person name="Buys C.H.C.M."/>
        </authorList>
    </citation>
    <scope>VARIANT HCAD CYS-754</scope>
</reference>